<name>LAC1B_CERUI</name>
<feature type="chain" id="PRO_0000310833" description="Laccase-1b">
    <location>
        <begin position="1"/>
        <end position="9" status="greater than"/>
    </location>
</feature>
<feature type="binding site" description="type 3 copper site" evidence="1">
    <location>
        <position position="9"/>
    </location>
    <ligand>
        <name>Cu cation</name>
        <dbReference type="ChEBI" id="CHEBI:23378"/>
        <label>3</label>
    </ligand>
</feature>
<feature type="non-terminal residue">
    <location>
        <position position="9"/>
    </location>
</feature>
<reference evidence="5" key="1">
    <citation type="submission" date="2007-10" db="UniProtKB">
        <authorList>
            <person name="Checinska A."/>
            <person name="Janusz G."/>
            <person name="Rogalski J.M."/>
        </authorList>
    </citation>
    <scope>PROTEIN SEQUENCE</scope>
    <scope>CATALYTIC ACTIVITY</scope>
    <scope>BIOPHYSICOCHEMICAL PROPERTIES</scope>
</reference>
<accession>P85308</accession>
<comment type="function">
    <text evidence="2 5">Lignin degradation and detoxification of lignin-derived products.</text>
</comment>
<comment type="catalytic activity">
    <reaction evidence="4">
        <text>4 hydroquinone + O2 = 4 benzosemiquinone + 2 H2O</text>
        <dbReference type="Rhea" id="RHEA:11276"/>
        <dbReference type="ChEBI" id="CHEBI:15377"/>
        <dbReference type="ChEBI" id="CHEBI:15379"/>
        <dbReference type="ChEBI" id="CHEBI:17594"/>
        <dbReference type="ChEBI" id="CHEBI:17977"/>
        <dbReference type="EC" id="1.10.3.2"/>
    </reaction>
</comment>
<comment type="cofactor">
    <cofactor evidence="2">
        <name>Cu cation</name>
        <dbReference type="ChEBI" id="CHEBI:23378"/>
    </cofactor>
    <text evidence="2">Binds 4 Cu cations per monomer.</text>
</comment>
<comment type="biophysicochemical properties">
    <kinetics>
        <KM evidence="4">0.153 mM for syringaldazine</KM>
    </kinetics>
    <phDependence>
        <text evidence="4">Optimum pH is 5.3.</text>
    </phDependence>
    <temperatureDependence>
        <text evidence="4">Optimum temperature is 60 degrees Celsius.</text>
    </temperatureDependence>
</comment>
<comment type="subcellular location">
    <subcellularLocation>
        <location evidence="2">Secreted</location>
    </subcellularLocation>
</comment>
<comment type="miscellaneous">
    <text>On the 2D-gel the determined pI of this protein is: 4.27, its MW is: 54.49 kDa.</text>
</comment>
<comment type="similarity">
    <text evidence="3">Belongs to the multicopper oxidase family.</text>
</comment>
<evidence type="ECO:0000250" key="1">
    <source>
        <dbReference type="UniProtKB" id="D0VWU3"/>
    </source>
</evidence>
<evidence type="ECO:0000250" key="2">
    <source>
        <dbReference type="UniProtKB" id="Q12718"/>
    </source>
</evidence>
<evidence type="ECO:0000255" key="3"/>
<evidence type="ECO:0000269" key="4">
    <source ref="1"/>
</evidence>
<evidence type="ECO:0000305" key="5"/>
<proteinExistence type="evidence at protein level"/>
<sequence>AIGPVADLH</sequence>
<organism>
    <name type="scientific">Cerrena unicolor</name>
    <name type="common">Canker rot fungus</name>
    <name type="synonym">Daedalea unicolor</name>
    <dbReference type="NCBI Taxonomy" id="90312"/>
    <lineage>
        <taxon>Eukaryota</taxon>
        <taxon>Fungi</taxon>
        <taxon>Dikarya</taxon>
        <taxon>Basidiomycota</taxon>
        <taxon>Agaricomycotina</taxon>
        <taxon>Agaricomycetes</taxon>
        <taxon>Polyporales</taxon>
        <taxon>Cerrenaceae</taxon>
        <taxon>Cerrena</taxon>
    </lineage>
</organism>
<protein>
    <recommendedName>
        <fullName>Laccase-1b</fullName>
        <ecNumber evidence="4">1.10.3.2</ecNumber>
    </recommendedName>
    <alternativeName>
        <fullName>Benzenediol:oxygen oxidoreductase 1b</fullName>
    </alternativeName>
    <alternativeName>
        <fullName>Diphenol oxidase 1b</fullName>
    </alternativeName>
    <alternativeName>
        <fullName>Lac Ib</fullName>
    </alternativeName>
    <alternativeName>
        <fullName>Urishiol oxidase 1b</fullName>
    </alternativeName>
</protein>
<dbReference type="EC" id="1.10.3.2" evidence="4"/>
<dbReference type="GO" id="GO:0005576">
    <property type="term" value="C:extracellular region"/>
    <property type="evidence" value="ECO:0007669"/>
    <property type="project" value="UniProtKB-SubCell"/>
</dbReference>
<dbReference type="GO" id="GO:0052716">
    <property type="term" value="F:hydroquinone:oxygen oxidoreductase activity"/>
    <property type="evidence" value="ECO:0007669"/>
    <property type="project" value="UniProtKB-EC"/>
</dbReference>
<dbReference type="GO" id="GO:0046872">
    <property type="term" value="F:metal ion binding"/>
    <property type="evidence" value="ECO:0007669"/>
    <property type="project" value="UniProtKB-KW"/>
</dbReference>
<dbReference type="GO" id="GO:0046274">
    <property type="term" value="P:lignin catabolic process"/>
    <property type="evidence" value="ECO:0007669"/>
    <property type="project" value="UniProtKB-KW"/>
</dbReference>
<keyword id="KW-0186">Copper</keyword>
<keyword id="KW-0903">Direct protein sequencing</keyword>
<keyword id="KW-0439">Lignin degradation</keyword>
<keyword id="KW-0479">Metal-binding</keyword>
<keyword id="KW-0560">Oxidoreductase</keyword>
<keyword id="KW-0964">Secreted</keyword>